<sequence>MIQLPPTPLHDLNPAFHQEFSSMSWSALHAMPSTTSVGPSLKEVNTFSQHKSHSIFHHGAEIEQQNKFRQEKVIISAPLDYLGSLPGKDIRGKLISAFNEWFKIPEEKLEVIKRVVGLLHVASLLYVHEIQHTHFEPSLTKPSKSLYRIDDIQDSSKLRRGLPVAHNIFGVAQTINSANYAYFRAQSELFTLGKPQALDIFTEELLRLHRGQGMDLYWRDSLICPTEEEYLEMVANKTGGLFRLAIKLIQLESENTMDCVPLVDLLGVIFQIRDDYQNLQSDQYAKNKGFGEDITEGKFSYPIIHSIRKDNGNSQLMNILRQKTEDEDVKRYTIQIIESTGSFEYTRQKLISLTAQARALLKSLGVDQSSGLASILEFLELKQ</sequence>
<name>ESDPD_PENSH</name>
<keyword id="KW-0460">Magnesium</keyword>
<keyword id="KW-0479">Metal-binding</keyword>
<keyword id="KW-0808">Transferase</keyword>
<protein>
    <recommendedName>
        <fullName evidence="3">Geranylgeranyl pyrophosphate synthase esdpD</fullName>
        <shortName evidence="4">GGPP synthase</shortName>
        <shortName evidence="4">GGPPSase</shortName>
        <ecNumber evidence="2">2.5.1.-</ecNumber>
    </recommendedName>
    <alternativeName>
        <fullName evidence="1">(2E,6E)-farnesyl diphosphate synthase</fullName>
    </alternativeName>
    <alternativeName>
        <fullName evidence="1">15-deoxyoxalicine B biosynthesis cluster protein C</fullName>
    </alternativeName>
    <alternativeName>
        <fullName evidence="1">Dimethylallyltranstransferase</fullName>
        <ecNumber evidence="1">2.5.1.1</ecNumber>
    </alternativeName>
    <alternativeName>
        <fullName evidence="3">Diterpenoid pyrone biosynthesis cluster protein D</fullName>
    </alternativeName>
    <alternativeName>
        <fullName evidence="1">Farnesyl diphosphate synthase</fullName>
    </alternativeName>
    <alternativeName>
        <fullName evidence="1">Farnesyltranstransferase</fullName>
        <ecNumber evidence="1">2.5.1.29</ecNumber>
    </alternativeName>
    <alternativeName>
        <fullName evidence="1">Geranylgeranyl diphosphate synthase</fullName>
    </alternativeName>
    <alternativeName>
        <fullName evidence="1">Geranyltranstransferase</fullName>
        <ecNumber evidence="1">2.5.1.10</ecNumber>
    </alternativeName>
</protein>
<accession>A0A8D5M3Y5</accession>
<evidence type="ECO:0000250" key="1">
    <source>
        <dbReference type="UniProtKB" id="Q12051"/>
    </source>
</evidence>
<evidence type="ECO:0000269" key="2">
    <source>
    </source>
</evidence>
<evidence type="ECO:0000303" key="3">
    <source>
    </source>
</evidence>
<evidence type="ECO:0000305" key="4"/>
<reference key="1">
    <citation type="journal article" date="2022" name="J. Nat. Prod.">
        <title>Synthetic biology-based discovery of diterpenoid pyrones from the genome of Eupenicillium shearii.</title>
        <authorList>
            <person name="Morishita Y."/>
            <person name="Tsukada K."/>
            <person name="Murakami K."/>
            <person name="Irie K."/>
            <person name="Asai T."/>
        </authorList>
    </citation>
    <scope>NUCLEOTIDE SEQUENCE [GENOMIC DNA]</scope>
    <scope>FUNCTION</scope>
    <scope>CATALYTIC ACTIVITY</scope>
    <scope>PATHWAY</scope>
    <scope>BIOTECHNOLOGY</scope>
    <source>
        <strain>IFM 42152</strain>
    </source>
</reference>
<organism>
    <name type="scientific">Penicillium shearii</name>
    <name type="common">Eupenicillium shearii</name>
    <dbReference type="NCBI Taxonomy" id="904690"/>
    <lineage>
        <taxon>Eukaryota</taxon>
        <taxon>Fungi</taxon>
        <taxon>Dikarya</taxon>
        <taxon>Ascomycota</taxon>
        <taxon>Pezizomycotina</taxon>
        <taxon>Eurotiomycetes</taxon>
        <taxon>Eurotiomycetidae</taxon>
        <taxon>Eurotiales</taxon>
        <taxon>Aspergillaceae</taxon>
        <taxon>Penicillium</taxon>
    </lineage>
</organism>
<dbReference type="EC" id="2.5.1.-" evidence="2"/>
<dbReference type="EC" id="2.5.1.1" evidence="1"/>
<dbReference type="EC" id="2.5.1.29" evidence="1"/>
<dbReference type="EC" id="2.5.1.10" evidence="1"/>
<dbReference type="EMBL" id="LC600199">
    <property type="protein sequence ID" value="BCP96882.1"/>
    <property type="molecule type" value="Genomic_DNA"/>
</dbReference>
<dbReference type="SMR" id="A0A8D5M3Y5"/>
<dbReference type="UniPathway" id="UPA00213"/>
<dbReference type="GO" id="GO:0046872">
    <property type="term" value="F:metal ion binding"/>
    <property type="evidence" value="ECO:0007669"/>
    <property type="project" value="UniProtKB-KW"/>
</dbReference>
<dbReference type="GO" id="GO:0004659">
    <property type="term" value="F:prenyltransferase activity"/>
    <property type="evidence" value="ECO:0007669"/>
    <property type="project" value="InterPro"/>
</dbReference>
<dbReference type="GO" id="GO:0046165">
    <property type="term" value="P:alcohol biosynthetic process"/>
    <property type="evidence" value="ECO:0007669"/>
    <property type="project" value="UniProtKB-ARBA"/>
</dbReference>
<dbReference type="GO" id="GO:0008299">
    <property type="term" value="P:isoprenoid biosynthetic process"/>
    <property type="evidence" value="ECO:0007669"/>
    <property type="project" value="InterPro"/>
</dbReference>
<dbReference type="GO" id="GO:0043386">
    <property type="term" value="P:mycotoxin biosynthetic process"/>
    <property type="evidence" value="ECO:0007669"/>
    <property type="project" value="UniProtKB-ARBA"/>
</dbReference>
<dbReference type="CDD" id="cd00685">
    <property type="entry name" value="Trans_IPPS_HT"/>
    <property type="match status" value="1"/>
</dbReference>
<dbReference type="Gene3D" id="1.10.600.10">
    <property type="entry name" value="Farnesyl Diphosphate Synthase"/>
    <property type="match status" value="1"/>
</dbReference>
<dbReference type="InterPro" id="IPR008949">
    <property type="entry name" value="Isoprenoid_synthase_dom_sf"/>
</dbReference>
<dbReference type="InterPro" id="IPR000092">
    <property type="entry name" value="Polyprenyl_synt"/>
</dbReference>
<dbReference type="InterPro" id="IPR033749">
    <property type="entry name" value="Polyprenyl_synt_CS"/>
</dbReference>
<dbReference type="PANTHER" id="PTHR12001">
    <property type="entry name" value="GERANYLGERANYL PYROPHOSPHATE SYNTHASE"/>
    <property type="match status" value="1"/>
</dbReference>
<dbReference type="PANTHER" id="PTHR12001:SF70">
    <property type="entry name" value="PYROPHOSPHATE SYNTHETASE ATMG, PUTATIVE (AFU_ORTHOLOGUE AFUA_8G02400)-RELATED"/>
    <property type="match status" value="1"/>
</dbReference>
<dbReference type="Pfam" id="PF00348">
    <property type="entry name" value="polyprenyl_synt"/>
    <property type="match status" value="2"/>
</dbReference>
<dbReference type="SFLD" id="SFLDS00005">
    <property type="entry name" value="Isoprenoid_Synthase_Type_I"/>
    <property type="match status" value="1"/>
</dbReference>
<dbReference type="SUPFAM" id="SSF48576">
    <property type="entry name" value="Terpenoid synthases"/>
    <property type="match status" value="1"/>
</dbReference>
<dbReference type="PROSITE" id="PS00444">
    <property type="entry name" value="POLYPRENYL_SYNTHASE_2"/>
    <property type="match status" value="1"/>
</dbReference>
<comment type="function">
    <text evidence="2">Geranylgeranyl pyrophosphate synthase; part of the cluster that mediates the biosynthesis of shearones, diterpenoid pyrones (DPs) which are structurally diverse meroterpenoids consisting of a diterpene linked by a pyrone, and which may exhibit a range of bioactivities (PubMed:35057611). Within the pathway, esdpD takes part to the biosynthesis of the molecular scaffold by providing geranylgeranyl pyrophosphate (GGPP) to the prenyltransferase esdpC for C-3 geranylgeranylation of the alpha-pyrone (PubMed:35057611). The molecular scaffold is commonly biosynthesized by a series of enzymes including the non-reducing polyketide synthase (NR-PKS) esdpA that generates an alpha-pyrone; the prenyltransferase esdpC that attaches a geranylgeranyl pyrophosphate (GGPP) produced by the GGPP synthase (GGPPS) esdpD onto the pyrone unit; the FAD-dependent monooxygenase esdpE that converts an olefin on the diterpene unit into an epoxide; and the terpene cyclase esdpB that catalyzes the cyclization reactions to give the molecular backbone shearone A (PubMed:35057611). In the modification steps, esdpF oxidizes the hydroxy group to a ketone at C-3 and esdpG then attaches hydroxy groups at both C-11 and C-12. After that, esdpI hydroxylates at C-20 and esdpH hydroxylates at C-6'. The ether bridge is generated by nucleophilic attack of the hydroxy group at C-20 to the carbonyl carbon at C-3. EsdpH can also functions prior to esdpI. The different combinations of these modification enzymes lead to the production of diverse shearone derivatives, shearone I being the end product of the pathway (PubMed:35057611). The alpha-ketoglutarate-dependent dioxygenase esdpJ seems not to be involved in this pathway (PubMed:35057611).</text>
</comment>
<comment type="catalytic activity">
    <reaction evidence="1">
        <text>isopentenyl diphosphate + dimethylallyl diphosphate = (2E)-geranyl diphosphate + diphosphate</text>
        <dbReference type="Rhea" id="RHEA:22408"/>
        <dbReference type="ChEBI" id="CHEBI:33019"/>
        <dbReference type="ChEBI" id="CHEBI:57623"/>
        <dbReference type="ChEBI" id="CHEBI:58057"/>
        <dbReference type="ChEBI" id="CHEBI:128769"/>
        <dbReference type="EC" id="2.5.1.1"/>
    </reaction>
</comment>
<comment type="catalytic activity">
    <reaction evidence="1">
        <text>isopentenyl diphosphate + (2E)-geranyl diphosphate = (2E,6E)-farnesyl diphosphate + diphosphate</text>
        <dbReference type="Rhea" id="RHEA:19361"/>
        <dbReference type="ChEBI" id="CHEBI:33019"/>
        <dbReference type="ChEBI" id="CHEBI:58057"/>
        <dbReference type="ChEBI" id="CHEBI:128769"/>
        <dbReference type="ChEBI" id="CHEBI:175763"/>
        <dbReference type="EC" id="2.5.1.10"/>
    </reaction>
</comment>
<comment type="catalytic activity">
    <reaction evidence="1">
        <text>isopentenyl diphosphate + (2E,6E)-farnesyl diphosphate = (2E,6E,10E)-geranylgeranyl diphosphate + diphosphate</text>
        <dbReference type="Rhea" id="RHEA:17653"/>
        <dbReference type="ChEBI" id="CHEBI:33019"/>
        <dbReference type="ChEBI" id="CHEBI:58756"/>
        <dbReference type="ChEBI" id="CHEBI:128769"/>
        <dbReference type="ChEBI" id="CHEBI:175763"/>
        <dbReference type="EC" id="2.5.1.29"/>
    </reaction>
</comment>
<comment type="cofactor">
    <cofactor evidence="1">
        <name>Mg(2+)</name>
        <dbReference type="ChEBI" id="CHEBI:18420"/>
    </cofactor>
    <text evidence="1">Binds 3 Mg(2+) ions per subunit.</text>
</comment>
<comment type="pathway">
    <text evidence="2">Secondary metabolite biosynthesis; terpenoid biosynthesis.</text>
</comment>
<comment type="biotechnology">
    <text evidence="2">Shearone derivatives produced by this cluster are interesting candidates for Alzheimer's disease (AD) therapy since they moderately inhibit aggregation of amyloid beta 42 (Abeta42).</text>
</comment>
<comment type="similarity">
    <text evidence="4">Belongs to the FPP/GGPP synthase family.</text>
</comment>
<feature type="chain" id="PRO_0000461049" description="Geranylgeranyl pyrophosphate synthase esdpD">
    <location>
        <begin position="1"/>
        <end position="383"/>
    </location>
</feature>
<feature type="binding site" evidence="1">
    <location>
        <position position="88"/>
    </location>
    <ligand>
        <name>isopentenyl diphosphate</name>
        <dbReference type="ChEBI" id="CHEBI:128769"/>
    </ligand>
</feature>
<feature type="binding site" evidence="1">
    <location>
        <position position="91"/>
    </location>
    <ligand>
        <name>isopentenyl diphosphate</name>
        <dbReference type="ChEBI" id="CHEBI:128769"/>
    </ligand>
</feature>
<feature type="binding site" evidence="1">
    <location>
        <position position="120"/>
    </location>
    <ligand>
        <name>isopentenyl diphosphate</name>
        <dbReference type="ChEBI" id="CHEBI:128769"/>
    </ligand>
</feature>
<feature type="binding site" evidence="1">
    <location>
        <position position="150"/>
    </location>
    <ligand>
        <name>Mg(2+)</name>
        <dbReference type="ChEBI" id="CHEBI:18420"/>
        <label>1</label>
    </ligand>
</feature>
<feature type="binding site" evidence="1">
    <location>
        <position position="150"/>
    </location>
    <ligand>
        <name>Mg(2+)</name>
        <dbReference type="ChEBI" id="CHEBI:18420"/>
        <label>2</label>
    </ligand>
</feature>
<feature type="binding site" evidence="1">
    <location>
        <position position="154"/>
    </location>
    <ligand>
        <name>Mg(2+)</name>
        <dbReference type="ChEBI" id="CHEBI:18420"/>
        <label>1</label>
    </ligand>
</feature>
<feature type="binding site" evidence="1">
    <location>
        <position position="154"/>
    </location>
    <ligand>
        <name>Mg(2+)</name>
        <dbReference type="ChEBI" id="CHEBI:18420"/>
        <label>2</label>
    </ligand>
</feature>
<feature type="binding site" evidence="1">
    <location>
        <position position="159"/>
    </location>
    <ligand>
        <name>dimethylallyl diphosphate</name>
        <dbReference type="ChEBI" id="CHEBI:57623"/>
    </ligand>
</feature>
<feature type="binding site" evidence="1">
    <location>
        <position position="160"/>
    </location>
    <ligand>
        <name>isopentenyl diphosphate</name>
        <dbReference type="ChEBI" id="CHEBI:128769"/>
    </ligand>
</feature>
<feature type="binding site" evidence="1">
    <location>
        <position position="237"/>
    </location>
    <ligand>
        <name>dimethylallyl diphosphate</name>
        <dbReference type="ChEBI" id="CHEBI:57623"/>
    </ligand>
</feature>
<feature type="binding site" evidence="1">
    <location>
        <position position="238"/>
    </location>
    <ligand>
        <name>dimethylallyl diphosphate</name>
        <dbReference type="ChEBI" id="CHEBI:57623"/>
    </ligand>
</feature>
<feature type="binding site" evidence="1">
    <location>
        <position position="271"/>
    </location>
    <ligand>
        <name>dimethylallyl diphosphate</name>
        <dbReference type="ChEBI" id="CHEBI:57623"/>
    </ligand>
</feature>
<feature type="binding site" evidence="1">
    <location>
        <position position="274"/>
    </location>
    <ligand>
        <name>Mg(2+)</name>
        <dbReference type="ChEBI" id="CHEBI:18420"/>
        <label>3</label>
    </ligand>
</feature>
<feature type="binding site" evidence="1">
    <location>
        <position position="278"/>
    </location>
    <ligand>
        <name>dimethylallyl diphosphate</name>
        <dbReference type="ChEBI" id="CHEBI:57623"/>
    </ligand>
</feature>
<feature type="binding site" evidence="1">
    <location>
        <position position="288"/>
    </location>
    <ligand>
        <name>dimethylallyl diphosphate</name>
        <dbReference type="ChEBI" id="CHEBI:57623"/>
    </ligand>
</feature>
<feature type="binding site" evidence="1">
    <location>
        <position position="298"/>
    </location>
    <ligand>
        <name>dimethylallyl diphosphate</name>
        <dbReference type="ChEBI" id="CHEBI:57623"/>
    </ligand>
</feature>
<gene>
    <name evidence="3" type="primary">esdpD</name>
</gene>
<proteinExistence type="evidence at protein level"/>